<feature type="chain" id="PRO_0000099974" description="Ribosomal small subunit pseudouridine synthase A">
    <location>
        <begin position="1"/>
        <end position="231"/>
    </location>
</feature>
<feature type="domain" description="S4 RNA-binding" evidence="2">
    <location>
        <begin position="1"/>
        <end position="68"/>
    </location>
</feature>
<feature type="active site" description="Nucleophile" evidence="1">
    <location>
        <position position="102"/>
    </location>
</feature>
<protein>
    <recommendedName>
        <fullName>Ribosomal small subunit pseudouridine synthase A</fullName>
        <ecNumber>5.4.99.19</ecNumber>
    </recommendedName>
    <alternativeName>
        <fullName>16S pseudouridylate 516 synthase</fullName>
    </alternativeName>
    <alternativeName>
        <fullName>16S rRNA pseudouridine(516) synthase</fullName>
    </alternativeName>
    <alternativeName>
        <fullName>rRNA pseudouridylate synthase A</fullName>
    </alternativeName>
    <alternativeName>
        <fullName>rRNA-uridine isomerase A</fullName>
    </alternativeName>
</protein>
<dbReference type="EC" id="5.4.99.19"/>
<dbReference type="EMBL" id="AE005674">
    <property type="protein sequence ID" value="AAN43789.1"/>
    <property type="molecule type" value="Genomic_DNA"/>
</dbReference>
<dbReference type="EMBL" id="AE014073">
    <property type="protein sequence ID" value="AAP17606.1"/>
    <property type="molecule type" value="Genomic_DNA"/>
</dbReference>
<dbReference type="RefSeq" id="NP_708082.1">
    <property type="nucleotide sequence ID" value="NC_004337.2"/>
</dbReference>
<dbReference type="RefSeq" id="WP_001234850.1">
    <property type="nucleotide sequence ID" value="NZ_WPGW01000022.1"/>
</dbReference>
<dbReference type="SMR" id="P0AA46"/>
<dbReference type="STRING" id="198214.SF2270"/>
<dbReference type="PaxDb" id="198214-SF2270"/>
<dbReference type="GeneID" id="1024633"/>
<dbReference type="GeneID" id="75206437"/>
<dbReference type="KEGG" id="sfl:SF2270"/>
<dbReference type="KEGG" id="sfx:S2399"/>
<dbReference type="PATRIC" id="fig|198214.7.peg.2719"/>
<dbReference type="HOGENOM" id="CLU_024979_1_2_6"/>
<dbReference type="Proteomes" id="UP000001006">
    <property type="component" value="Chromosome"/>
</dbReference>
<dbReference type="Proteomes" id="UP000002673">
    <property type="component" value="Chromosome"/>
</dbReference>
<dbReference type="GO" id="GO:0160136">
    <property type="term" value="F:16S rRNA pseudouridine(516) synthase activity"/>
    <property type="evidence" value="ECO:0007669"/>
    <property type="project" value="UniProtKB-EC"/>
</dbReference>
<dbReference type="GO" id="GO:0003723">
    <property type="term" value="F:RNA binding"/>
    <property type="evidence" value="ECO:0007669"/>
    <property type="project" value="UniProtKB-KW"/>
</dbReference>
<dbReference type="GO" id="GO:0000455">
    <property type="term" value="P:enzyme-directed rRNA pseudouridine synthesis"/>
    <property type="evidence" value="ECO:0007669"/>
    <property type="project" value="UniProtKB-ARBA"/>
</dbReference>
<dbReference type="CDD" id="cd02553">
    <property type="entry name" value="PseudoU_synth_RsuA"/>
    <property type="match status" value="1"/>
</dbReference>
<dbReference type="CDD" id="cd00165">
    <property type="entry name" value="S4"/>
    <property type="match status" value="1"/>
</dbReference>
<dbReference type="FunFam" id="3.10.290.10:FF:000009">
    <property type="entry name" value="Pseudouridine synthase"/>
    <property type="match status" value="1"/>
</dbReference>
<dbReference type="FunFam" id="3.30.70.1560:FF:000001">
    <property type="entry name" value="Pseudouridine synthase"/>
    <property type="match status" value="1"/>
</dbReference>
<dbReference type="FunFam" id="3.30.70.580:FF:000004">
    <property type="entry name" value="Pseudouridine synthase"/>
    <property type="match status" value="1"/>
</dbReference>
<dbReference type="Gene3D" id="3.30.70.1560">
    <property type="entry name" value="Alpha-L RNA-binding motif"/>
    <property type="match status" value="1"/>
</dbReference>
<dbReference type="Gene3D" id="3.30.70.580">
    <property type="entry name" value="Pseudouridine synthase I, catalytic domain, N-terminal subdomain"/>
    <property type="match status" value="1"/>
</dbReference>
<dbReference type="Gene3D" id="3.10.290.10">
    <property type="entry name" value="RNA-binding S4 domain"/>
    <property type="match status" value="1"/>
</dbReference>
<dbReference type="InterPro" id="IPR042092">
    <property type="entry name" value="PsdUridine_s_RsuA/RluB/E/F_cat"/>
</dbReference>
<dbReference type="InterPro" id="IPR020103">
    <property type="entry name" value="PsdUridine_synth_cat_dom_sf"/>
</dbReference>
<dbReference type="InterPro" id="IPR006145">
    <property type="entry name" value="PsdUridine_synth_RsuA/RluA"/>
</dbReference>
<dbReference type="InterPro" id="IPR000748">
    <property type="entry name" value="PsdUridine_synth_RsuA/RluB/E/F"/>
</dbReference>
<dbReference type="InterPro" id="IPR018496">
    <property type="entry name" value="PsdUridine_synth_RsuA/RluB_CS"/>
</dbReference>
<dbReference type="InterPro" id="IPR050343">
    <property type="entry name" value="RsuA_PseudoU_synthase"/>
</dbReference>
<dbReference type="InterPro" id="IPR002942">
    <property type="entry name" value="S4_RNA-bd"/>
</dbReference>
<dbReference type="InterPro" id="IPR036986">
    <property type="entry name" value="S4_RNA-bd_sf"/>
</dbReference>
<dbReference type="InterPro" id="IPR020094">
    <property type="entry name" value="TruA/RsuA/RluB/E/F_N"/>
</dbReference>
<dbReference type="NCBIfam" id="NF008097">
    <property type="entry name" value="PRK10839.1"/>
    <property type="match status" value="1"/>
</dbReference>
<dbReference type="NCBIfam" id="TIGR00093">
    <property type="entry name" value="pseudouridine synthase"/>
    <property type="match status" value="1"/>
</dbReference>
<dbReference type="PANTHER" id="PTHR47683:SF4">
    <property type="entry name" value="PSEUDOURIDINE SYNTHASE"/>
    <property type="match status" value="1"/>
</dbReference>
<dbReference type="PANTHER" id="PTHR47683">
    <property type="entry name" value="PSEUDOURIDINE SYNTHASE FAMILY PROTEIN-RELATED"/>
    <property type="match status" value="1"/>
</dbReference>
<dbReference type="Pfam" id="PF00849">
    <property type="entry name" value="PseudoU_synth_2"/>
    <property type="match status" value="1"/>
</dbReference>
<dbReference type="Pfam" id="PF01479">
    <property type="entry name" value="S4"/>
    <property type="match status" value="1"/>
</dbReference>
<dbReference type="SMART" id="SM00363">
    <property type="entry name" value="S4"/>
    <property type="match status" value="1"/>
</dbReference>
<dbReference type="SUPFAM" id="SSF55174">
    <property type="entry name" value="Alpha-L RNA-binding motif"/>
    <property type="match status" value="1"/>
</dbReference>
<dbReference type="SUPFAM" id="SSF55120">
    <property type="entry name" value="Pseudouridine synthase"/>
    <property type="match status" value="1"/>
</dbReference>
<dbReference type="PROSITE" id="PS01149">
    <property type="entry name" value="PSI_RSU"/>
    <property type="match status" value="1"/>
</dbReference>
<dbReference type="PROSITE" id="PS50889">
    <property type="entry name" value="S4"/>
    <property type="match status" value="1"/>
</dbReference>
<accession>P0AA46</accession>
<accession>P33918</accession>
<organism>
    <name type="scientific">Shigella flexneri</name>
    <dbReference type="NCBI Taxonomy" id="623"/>
    <lineage>
        <taxon>Bacteria</taxon>
        <taxon>Pseudomonadati</taxon>
        <taxon>Pseudomonadota</taxon>
        <taxon>Gammaproteobacteria</taxon>
        <taxon>Enterobacterales</taxon>
        <taxon>Enterobacteriaceae</taxon>
        <taxon>Shigella</taxon>
    </lineage>
</organism>
<keyword id="KW-0413">Isomerase</keyword>
<keyword id="KW-1185">Reference proteome</keyword>
<keyword id="KW-0694">RNA-binding</keyword>
<keyword id="KW-0698">rRNA processing</keyword>
<evidence type="ECO:0000250" key="1"/>
<evidence type="ECO:0000255" key="2">
    <source>
        <dbReference type="PROSITE-ProRule" id="PRU00182"/>
    </source>
</evidence>
<evidence type="ECO:0000305" key="3"/>
<name>RSUA_SHIFL</name>
<gene>
    <name type="primary">rsuA</name>
    <name type="ordered locus">SF2270</name>
    <name type="ordered locus">S2399</name>
</gene>
<comment type="function">
    <text evidence="1">Responsible for synthesis of pseudouridine from uracil-516 in 16S ribosomal RNA.</text>
</comment>
<comment type="catalytic activity">
    <reaction>
        <text>uridine(516) in 16S rRNA = pseudouridine(516) in 16S rRNA</text>
        <dbReference type="Rhea" id="RHEA:38867"/>
        <dbReference type="Rhea" id="RHEA-COMP:10089"/>
        <dbReference type="Rhea" id="RHEA-COMP:10090"/>
        <dbReference type="ChEBI" id="CHEBI:65314"/>
        <dbReference type="ChEBI" id="CHEBI:65315"/>
        <dbReference type="EC" id="5.4.99.19"/>
    </reaction>
</comment>
<comment type="subunit">
    <text evidence="1">Monomer.</text>
</comment>
<comment type="similarity">
    <text evidence="3">Belongs to the pseudouridine synthase RsuA family.</text>
</comment>
<proteinExistence type="inferred from homology"/>
<sequence length="231" mass="25865">MRLDKFIAQQLGVSRAIAGREIRGNRVTVDGEIVRNAAFKLLPEHDVAYDGNPLAQQHGPRYFMLNKPQGYVCSTDDPDHPTVLYFLDEPVAWKLHAAGRLDIDTTGLVLMTDDGQWSHRITSPRHHCEKTYLVTLESPVADDTAEQFAKGVQLHNEKDLTKPAVLEVITPTQVRLTISEGRYHQVKRMFAAVGNHVVELHRERIGGITLDADLAPGEYRPLTEEEIASVV</sequence>
<reference key="1">
    <citation type="journal article" date="2002" name="Nucleic Acids Res.">
        <title>Genome sequence of Shigella flexneri 2a: insights into pathogenicity through comparison with genomes of Escherichia coli K12 and O157.</title>
        <authorList>
            <person name="Jin Q."/>
            <person name="Yuan Z."/>
            <person name="Xu J."/>
            <person name="Wang Y."/>
            <person name="Shen Y."/>
            <person name="Lu W."/>
            <person name="Wang J."/>
            <person name="Liu H."/>
            <person name="Yang J."/>
            <person name="Yang F."/>
            <person name="Zhang X."/>
            <person name="Zhang J."/>
            <person name="Yang G."/>
            <person name="Wu H."/>
            <person name="Qu D."/>
            <person name="Dong J."/>
            <person name="Sun L."/>
            <person name="Xue Y."/>
            <person name="Zhao A."/>
            <person name="Gao Y."/>
            <person name="Zhu J."/>
            <person name="Kan B."/>
            <person name="Ding K."/>
            <person name="Chen S."/>
            <person name="Cheng H."/>
            <person name="Yao Z."/>
            <person name="He B."/>
            <person name="Chen R."/>
            <person name="Ma D."/>
            <person name="Qiang B."/>
            <person name="Wen Y."/>
            <person name="Hou Y."/>
            <person name="Yu J."/>
        </authorList>
    </citation>
    <scope>NUCLEOTIDE SEQUENCE [LARGE SCALE GENOMIC DNA]</scope>
    <source>
        <strain>301 / Serotype 2a</strain>
    </source>
</reference>
<reference key="2">
    <citation type="journal article" date="2003" name="Infect. Immun.">
        <title>Complete genome sequence and comparative genomics of Shigella flexneri serotype 2a strain 2457T.</title>
        <authorList>
            <person name="Wei J."/>
            <person name="Goldberg M.B."/>
            <person name="Burland V."/>
            <person name="Venkatesan M.M."/>
            <person name="Deng W."/>
            <person name="Fournier G."/>
            <person name="Mayhew G.F."/>
            <person name="Plunkett G. III"/>
            <person name="Rose D.J."/>
            <person name="Darling A."/>
            <person name="Mau B."/>
            <person name="Perna N.T."/>
            <person name="Payne S.M."/>
            <person name="Runyen-Janecky L.J."/>
            <person name="Zhou S."/>
            <person name="Schwartz D.C."/>
            <person name="Blattner F.R."/>
        </authorList>
    </citation>
    <scope>NUCLEOTIDE SEQUENCE [LARGE SCALE GENOMIC DNA]</scope>
    <source>
        <strain>ATCC 700930 / 2457T / Serotype 2a</strain>
    </source>
</reference>